<reference key="1">
    <citation type="journal article" date="1993" name="J. Biol. Chem.">
        <title>Novel use of an iodo-myristyl-CoA analog identifies a semialdehyde dehydrogenase in bovine liver.</title>
        <authorList>
            <person name="Deichaite I."/>
            <person name="Berthiaume L."/>
            <person name="Peseckis S.M."/>
            <person name="Patton W.F."/>
            <person name="Resh M.D."/>
        </authorList>
    </citation>
    <scope>NUCLEOTIDE SEQUENCE [MRNA]</scope>
    <scope>PARTIAL PROTEIN SEQUENCE</scope>
    <scope>CATALYTIC ACTIVITY</scope>
    <source>
        <tissue>Liver</tissue>
    </source>
</reference>
<proteinExistence type="evidence at protein level"/>
<name>MMSA_BOVIN</name>
<feature type="transit peptide" description="Mitochondrion" evidence="1">
    <location>
        <begin position="1"/>
        <end position="34"/>
    </location>
</feature>
<feature type="chain" id="PRO_0000007188" description="Methylmalonate-semialdehyde/malonate-semialdehyde dehydrogenase [acylating], mitochondrial">
    <location>
        <begin position="35"/>
        <end position="537"/>
    </location>
</feature>
<feature type="active site" description="Nucleophile" evidence="6">
    <location>
        <position position="319"/>
    </location>
</feature>
<feature type="binding site" evidence="2">
    <location>
        <position position="185"/>
    </location>
    <ligand>
        <name>NAD(+)</name>
        <dbReference type="ChEBI" id="CHEBI:57540"/>
    </ligand>
</feature>
<feature type="binding site" evidence="2">
    <location>
        <position position="187"/>
    </location>
    <ligand>
        <name>NAD(+)</name>
        <dbReference type="ChEBI" id="CHEBI:57540"/>
    </ligand>
</feature>
<feature type="binding site" evidence="2">
    <location>
        <position position="211"/>
    </location>
    <ligand>
        <name>NAD(+)</name>
        <dbReference type="ChEBI" id="CHEBI:57540"/>
    </ligand>
</feature>
<feature type="binding site" evidence="2">
    <location>
        <position position="214"/>
    </location>
    <ligand>
        <name>NAD(+)</name>
        <dbReference type="ChEBI" id="CHEBI:57540"/>
    </ligand>
</feature>
<feature type="binding site" evidence="2">
    <location>
        <position position="215"/>
    </location>
    <ligand>
        <name>NAD(+)</name>
        <dbReference type="ChEBI" id="CHEBI:57540"/>
    </ligand>
</feature>
<feature type="binding site" evidence="2">
    <location>
        <position position="264"/>
    </location>
    <ligand>
        <name>NAD(+)</name>
        <dbReference type="ChEBI" id="CHEBI:57540"/>
    </ligand>
</feature>
<feature type="binding site" evidence="2">
    <location>
        <position position="419"/>
    </location>
    <ligand>
        <name>NAD(+)</name>
        <dbReference type="ChEBI" id="CHEBI:57540"/>
    </ligand>
</feature>
<feature type="modified residue" description="N6-acetyllysine; alternate" evidence="5">
    <location>
        <position position="49"/>
    </location>
</feature>
<feature type="modified residue" description="N6-succinyllysine; alternate" evidence="5">
    <location>
        <position position="49"/>
    </location>
</feature>
<feature type="modified residue" description="N6-acetyllysine; alternate" evidence="5">
    <location>
        <position position="54"/>
    </location>
</feature>
<feature type="modified residue" description="N6-succinyllysine; alternate" evidence="5">
    <location>
        <position position="54"/>
    </location>
</feature>
<feature type="modified residue" description="N6-acetyllysine; alternate" evidence="5">
    <location>
        <position position="57"/>
    </location>
</feature>
<feature type="modified residue" description="N6-succinyllysine; alternate" evidence="5">
    <location>
        <position position="57"/>
    </location>
</feature>
<feature type="modified residue" description="N6-acetyllysine; alternate" evidence="5">
    <location>
        <position position="78"/>
    </location>
</feature>
<feature type="modified residue" description="N6-succinyllysine; alternate" evidence="5">
    <location>
        <position position="78"/>
    </location>
</feature>
<feature type="modified residue" description="N6-acetyllysine" evidence="5">
    <location>
        <position position="89"/>
    </location>
</feature>
<feature type="modified residue" description="N6-acetyllysine; alternate" evidence="5">
    <location>
        <position position="119"/>
    </location>
</feature>
<feature type="modified residue" description="N6-succinyllysine; alternate" evidence="5">
    <location>
        <position position="119"/>
    </location>
</feature>
<feature type="modified residue" description="N6-acetyllysine; alternate" evidence="5">
    <location>
        <position position="131"/>
    </location>
</feature>
<feature type="modified residue" description="N6-succinyllysine; alternate" evidence="5">
    <location>
        <position position="131"/>
    </location>
</feature>
<feature type="modified residue" description="Phosphoserine" evidence="3">
    <location>
        <position position="264"/>
    </location>
</feature>
<feature type="modified residue" description="N6-acetyllysine" evidence="5">
    <location>
        <position position="300"/>
    </location>
</feature>
<feature type="modified residue" description="N6-acetyllysine" evidence="5">
    <location>
        <position position="332"/>
    </location>
</feature>
<feature type="modified residue" description="N6-acetyllysine" evidence="5">
    <location>
        <position position="333"/>
    </location>
</feature>
<feature type="modified residue" description="N6-acetyllysine; alternate" evidence="5">
    <location>
        <position position="366"/>
    </location>
</feature>
<feature type="modified residue" description="N6-succinyllysine; alternate" evidence="5">
    <location>
        <position position="366"/>
    </location>
</feature>
<feature type="modified residue" description="N6-acetyllysine; alternate" evidence="5">
    <location>
        <position position="378"/>
    </location>
</feature>
<feature type="modified residue" description="N6-succinyllysine; alternate" evidence="5">
    <location>
        <position position="378"/>
    </location>
</feature>
<feature type="modified residue" description="Phosphoserine" evidence="3">
    <location>
        <position position="382"/>
    </location>
</feature>
<feature type="modified residue" description="N6-succinyllysine" evidence="5">
    <location>
        <position position="393"/>
    </location>
</feature>
<feature type="modified residue" description="N6-acetyllysine" evidence="5">
    <location>
        <position position="502"/>
    </location>
</feature>
<feature type="modified residue" description="N6-succinyllysine" evidence="5">
    <location>
        <position position="519"/>
    </location>
</feature>
<feature type="sequence conflict" description="In Ref. 1; AA sequence." evidence="9" ref="1">
    <original>ML</original>
    <variation>TD</variation>
    <location>
        <begin position="126"/>
        <end position="127"/>
    </location>
</feature>
<dbReference type="EC" id="1.2.1.27" evidence="7"/>
<dbReference type="EMBL" id="L08643">
    <property type="protein sequence ID" value="AAA30650.1"/>
    <property type="molecule type" value="mRNA"/>
</dbReference>
<dbReference type="PIR" id="A46600">
    <property type="entry name" value="A46600"/>
</dbReference>
<dbReference type="RefSeq" id="NP_787005.1">
    <property type="nucleotide sequence ID" value="NM_175811.2"/>
</dbReference>
<dbReference type="SMR" id="Q07536"/>
<dbReference type="FunCoup" id="Q07536">
    <property type="interactions" value="1787"/>
</dbReference>
<dbReference type="STRING" id="9913.ENSBTAP00000058160"/>
<dbReference type="SwissPalm" id="Q07536"/>
<dbReference type="PaxDb" id="9913-ENSBTAP00000024584"/>
<dbReference type="PeptideAtlas" id="Q07536"/>
<dbReference type="GeneID" id="327692"/>
<dbReference type="KEGG" id="bta:327692"/>
<dbReference type="CTD" id="4329"/>
<dbReference type="eggNOG" id="KOG2449">
    <property type="taxonomic scope" value="Eukaryota"/>
</dbReference>
<dbReference type="InParanoid" id="Q07536"/>
<dbReference type="OrthoDB" id="310895at2759"/>
<dbReference type="Proteomes" id="UP000009136">
    <property type="component" value="Unplaced"/>
</dbReference>
<dbReference type="GO" id="GO:0005739">
    <property type="term" value="C:mitochondrion"/>
    <property type="evidence" value="ECO:0000318"/>
    <property type="project" value="GO_Central"/>
</dbReference>
<dbReference type="GO" id="GO:0018478">
    <property type="term" value="F:malonate-semialdehyde dehydrogenase (acetylating) activity"/>
    <property type="evidence" value="ECO:0007669"/>
    <property type="project" value="UniProtKB-EC"/>
</dbReference>
<dbReference type="GO" id="GO:0004491">
    <property type="term" value="F:methylmalonate-semialdehyde dehydrogenase (acylating, NAD) activity"/>
    <property type="evidence" value="ECO:0000314"/>
    <property type="project" value="UniProtKB"/>
</dbReference>
<dbReference type="GO" id="GO:0006210">
    <property type="term" value="P:thymine catabolic process"/>
    <property type="evidence" value="ECO:0000318"/>
    <property type="project" value="GO_Central"/>
</dbReference>
<dbReference type="GO" id="GO:0019859">
    <property type="term" value="P:thymine metabolic process"/>
    <property type="evidence" value="ECO:0000250"/>
    <property type="project" value="UniProtKB"/>
</dbReference>
<dbReference type="GO" id="GO:0006574">
    <property type="term" value="P:valine catabolic process"/>
    <property type="evidence" value="ECO:0000318"/>
    <property type="project" value="GO_Central"/>
</dbReference>
<dbReference type="GO" id="GO:0006573">
    <property type="term" value="P:valine metabolic process"/>
    <property type="evidence" value="ECO:0000250"/>
    <property type="project" value="UniProtKB"/>
</dbReference>
<dbReference type="CDD" id="cd07085">
    <property type="entry name" value="ALDH_F6_MMSDH"/>
    <property type="match status" value="1"/>
</dbReference>
<dbReference type="FunFam" id="3.40.309.10:FF:000002">
    <property type="entry name" value="Methylmalonate-semialdehyde dehydrogenase (Acylating)"/>
    <property type="match status" value="1"/>
</dbReference>
<dbReference type="FunFam" id="3.40.605.10:FF:000003">
    <property type="entry name" value="Methylmalonate-semialdehyde dehydrogenase [acylating]"/>
    <property type="match status" value="1"/>
</dbReference>
<dbReference type="Gene3D" id="3.40.605.10">
    <property type="entry name" value="Aldehyde Dehydrogenase, Chain A, domain 1"/>
    <property type="match status" value="1"/>
</dbReference>
<dbReference type="Gene3D" id="3.40.309.10">
    <property type="entry name" value="Aldehyde Dehydrogenase, Chain A, domain 2"/>
    <property type="match status" value="1"/>
</dbReference>
<dbReference type="InterPro" id="IPR016161">
    <property type="entry name" value="Ald_DH/histidinol_DH"/>
</dbReference>
<dbReference type="InterPro" id="IPR016163">
    <property type="entry name" value="Ald_DH_C"/>
</dbReference>
<dbReference type="InterPro" id="IPR016160">
    <property type="entry name" value="Ald_DH_CS_CYS"/>
</dbReference>
<dbReference type="InterPro" id="IPR016162">
    <property type="entry name" value="Ald_DH_N"/>
</dbReference>
<dbReference type="InterPro" id="IPR015590">
    <property type="entry name" value="Aldehyde_DH_dom"/>
</dbReference>
<dbReference type="InterPro" id="IPR010061">
    <property type="entry name" value="MeMal-semiAld_DH"/>
</dbReference>
<dbReference type="NCBIfam" id="TIGR01722">
    <property type="entry name" value="MMSDH"/>
    <property type="match status" value="1"/>
</dbReference>
<dbReference type="PANTHER" id="PTHR43866">
    <property type="entry name" value="MALONATE-SEMIALDEHYDE DEHYDROGENASE"/>
    <property type="match status" value="1"/>
</dbReference>
<dbReference type="PANTHER" id="PTHR43866:SF3">
    <property type="entry name" value="METHYLMALONATE-SEMIALDEHYDE DEHYDROGENASE [ACYLATING], MITOCHONDRIAL"/>
    <property type="match status" value="1"/>
</dbReference>
<dbReference type="Pfam" id="PF00171">
    <property type="entry name" value="Aldedh"/>
    <property type="match status" value="1"/>
</dbReference>
<dbReference type="SUPFAM" id="SSF53720">
    <property type="entry name" value="ALDH-like"/>
    <property type="match status" value="1"/>
</dbReference>
<dbReference type="PROSITE" id="PS00070">
    <property type="entry name" value="ALDEHYDE_DEHYDR_CYS"/>
    <property type="match status" value="1"/>
</dbReference>
<gene>
    <name type="primary">ALDH6A1</name>
    <name type="synonym">MMSDH</name>
</gene>
<sequence length="537" mass="58063">MAAVAVAAAAAALRARILQVSSKVNSSWQPASSFSSSSVPTVKLFIDGKFIESKSDKWIDIHNPATNEVIGRVPESTKAEMDAAVSSCKRTFPAWADTSILSRQQVLLRYQQLIKENLKEIARLIMLEQGKTLADAEGDVFRGLQVVEHACSVTSLMLGDTMPSITKDMDLYSYRLPLGVCAGIAPFNFPAMIPLWMFPMAMVCGNTFLMKPSERVPGATMLLAKLFQDSGAPDGTLNIIHGQHEAVNFICDHPDIKAISFVGSNQAGEYIFERGSRHGKRVQANMGAKNHGVVMPDANKENTLNQLVGAAFGAAGQRCMALSTAILVGEAKKWLPELVERAKKLRVNAGDQPGADLGPLITPQAKERVCNLIDSGTKEGASILLDGRSIKVKGYENGNFVGPTIISNVKPNMTCYKEEIFGPVLVVLETDTLDEAIKIVNDNPYGNGTAIFTTNGATARKYSHLVDVGQVGVNVPIPVPLPMFSFTGSRASFRGDTNFYGKQGIQFYTQLKTITSQWKEEDASLSSPAVVMPTMGR</sequence>
<organism>
    <name type="scientific">Bos taurus</name>
    <name type="common">Bovine</name>
    <dbReference type="NCBI Taxonomy" id="9913"/>
    <lineage>
        <taxon>Eukaryota</taxon>
        <taxon>Metazoa</taxon>
        <taxon>Chordata</taxon>
        <taxon>Craniata</taxon>
        <taxon>Vertebrata</taxon>
        <taxon>Euteleostomi</taxon>
        <taxon>Mammalia</taxon>
        <taxon>Eutheria</taxon>
        <taxon>Laurasiatheria</taxon>
        <taxon>Artiodactyla</taxon>
        <taxon>Ruminantia</taxon>
        <taxon>Pecora</taxon>
        <taxon>Bovidae</taxon>
        <taxon>Bovinae</taxon>
        <taxon>Bos</taxon>
    </lineage>
</organism>
<comment type="function">
    <text evidence="4">Malonate and methylmalonate semialdehyde dehydrogenase involved in the catabolism of valine, thymine, and compounds catabolized by way of beta-alanine, including uracil and cytidine.</text>
</comment>
<comment type="catalytic activity">
    <reaction evidence="7">
        <text>2-methyl-3-oxopropanoate + NAD(+) + CoA + H2O = propanoyl-CoA + hydrogencarbonate + NADH + H(+)</text>
        <dbReference type="Rhea" id="RHEA:20804"/>
        <dbReference type="ChEBI" id="CHEBI:15377"/>
        <dbReference type="ChEBI" id="CHEBI:15378"/>
        <dbReference type="ChEBI" id="CHEBI:17544"/>
        <dbReference type="ChEBI" id="CHEBI:57287"/>
        <dbReference type="ChEBI" id="CHEBI:57392"/>
        <dbReference type="ChEBI" id="CHEBI:57540"/>
        <dbReference type="ChEBI" id="CHEBI:57700"/>
        <dbReference type="ChEBI" id="CHEBI:57945"/>
        <dbReference type="EC" id="1.2.1.27"/>
    </reaction>
    <physiologicalReaction direction="left-to-right" evidence="10">
        <dbReference type="Rhea" id="RHEA:20805"/>
    </physiologicalReaction>
</comment>
<comment type="catalytic activity">
    <reaction evidence="7">
        <text>3-oxopropanoate + NAD(+) + CoA + H2O = hydrogencarbonate + acetyl-CoA + NADH + H(+)</text>
        <dbReference type="Rhea" id="RHEA:76615"/>
        <dbReference type="ChEBI" id="CHEBI:15377"/>
        <dbReference type="ChEBI" id="CHEBI:15378"/>
        <dbReference type="ChEBI" id="CHEBI:17544"/>
        <dbReference type="ChEBI" id="CHEBI:33190"/>
        <dbReference type="ChEBI" id="CHEBI:57287"/>
        <dbReference type="ChEBI" id="CHEBI:57288"/>
        <dbReference type="ChEBI" id="CHEBI:57540"/>
        <dbReference type="ChEBI" id="CHEBI:57945"/>
        <dbReference type="EC" id="1.2.1.27"/>
    </reaction>
    <physiologicalReaction direction="left-to-right" evidence="10">
        <dbReference type="Rhea" id="RHEA:76616"/>
    </physiologicalReaction>
</comment>
<comment type="catalytic activity">
    <reaction evidence="4">
        <text>(R)-2-methyl-3-oxopropanoate + NAD(+) + CoA + H2O = propanoyl-CoA + hydrogencarbonate + NADH + H(+)</text>
        <dbReference type="Rhea" id="RHEA:76623"/>
        <dbReference type="ChEBI" id="CHEBI:15377"/>
        <dbReference type="ChEBI" id="CHEBI:15378"/>
        <dbReference type="ChEBI" id="CHEBI:17544"/>
        <dbReference type="ChEBI" id="CHEBI:57287"/>
        <dbReference type="ChEBI" id="CHEBI:57392"/>
        <dbReference type="ChEBI" id="CHEBI:57540"/>
        <dbReference type="ChEBI" id="CHEBI:57945"/>
        <dbReference type="ChEBI" id="CHEBI:141212"/>
    </reaction>
    <physiologicalReaction direction="left-to-right" evidence="4">
        <dbReference type="Rhea" id="RHEA:76624"/>
    </physiologicalReaction>
</comment>
<comment type="catalytic activity">
    <reaction evidence="4">
        <text>(S)-2-methyl-3-oxopropanoate + NAD(+) + CoA + H2O = propanoyl-CoA + hydrogencarbonate + NADH + H(+)</text>
        <dbReference type="Rhea" id="RHEA:76627"/>
        <dbReference type="ChEBI" id="CHEBI:15377"/>
        <dbReference type="ChEBI" id="CHEBI:15378"/>
        <dbReference type="ChEBI" id="CHEBI:17544"/>
        <dbReference type="ChEBI" id="CHEBI:57287"/>
        <dbReference type="ChEBI" id="CHEBI:57392"/>
        <dbReference type="ChEBI" id="CHEBI:57540"/>
        <dbReference type="ChEBI" id="CHEBI:57945"/>
        <dbReference type="ChEBI" id="CHEBI:62413"/>
    </reaction>
    <physiologicalReaction direction="left-to-right" evidence="4">
        <dbReference type="Rhea" id="RHEA:76628"/>
    </physiologicalReaction>
</comment>
<comment type="subunit">
    <text evidence="4">Homodimer.</text>
</comment>
<comment type="subcellular location">
    <subcellularLocation>
        <location evidence="4">Mitochondrion</location>
    </subcellularLocation>
</comment>
<comment type="PTM">
    <text>The N-terminus is blocked.</text>
</comment>
<comment type="similarity">
    <text evidence="9">Belongs to the aldehyde dehydrogenase family.</text>
</comment>
<evidence type="ECO:0000250" key="1"/>
<evidence type="ECO:0000250" key="2">
    <source>
        <dbReference type="UniProtKB" id="P42412"/>
    </source>
</evidence>
<evidence type="ECO:0000250" key="3">
    <source>
        <dbReference type="UniProtKB" id="Q02252"/>
    </source>
</evidence>
<evidence type="ECO:0000250" key="4">
    <source>
        <dbReference type="UniProtKB" id="Q02253"/>
    </source>
</evidence>
<evidence type="ECO:0000250" key="5">
    <source>
        <dbReference type="UniProtKB" id="Q9EQ20"/>
    </source>
</evidence>
<evidence type="ECO:0000255" key="6">
    <source>
        <dbReference type="PROSITE-ProRule" id="PRU10008"/>
    </source>
</evidence>
<evidence type="ECO:0000269" key="7">
    <source>
    </source>
</evidence>
<evidence type="ECO:0000303" key="8">
    <source>
    </source>
</evidence>
<evidence type="ECO:0000305" key="9"/>
<evidence type="ECO:0000305" key="10">
    <source>
    </source>
</evidence>
<keyword id="KW-0007">Acetylation</keyword>
<keyword id="KW-0903">Direct protein sequencing</keyword>
<keyword id="KW-0496">Mitochondrion</keyword>
<keyword id="KW-0520">NAD</keyword>
<keyword id="KW-0560">Oxidoreductase</keyword>
<keyword id="KW-0597">Phosphoprotein</keyword>
<keyword id="KW-1185">Reference proteome</keyword>
<keyword id="KW-0809">Transit peptide</keyword>
<protein>
    <recommendedName>
        <fullName evidence="10">Methylmalonate-semialdehyde/malonate-semialdehyde dehydrogenase [acylating], mitochondrial</fullName>
        <shortName evidence="8">MMSDH</shortName>
        <ecNumber evidence="7">1.2.1.27</ecNumber>
    </recommendedName>
    <alternativeName>
        <fullName>Aldehyde dehydrogenase family 6 member A1</fullName>
    </alternativeName>
    <alternativeName>
        <fullName evidence="10">Malonate-semialdehyde dehydrogenase [acylating]</fullName>
    </alternativeName>
</protein>
<accession>Q07536</accession>